<accession>A2BTZ9</accession>
<sequence length="886" mass="99763">MKSQSQATPITGDEIRKAFLDFYESKSHLIIPSSSLIPDDPTVMLTIAGMLPFKPVFLGLRNRPSPRASSSQKCLRTNDIENVGVTARHHTFFEMLGNFSFGDYFKKEAIQWAWELITDIYHLKPENIIISVFHEDHESEKIWRDNIGIIPERIIRLDEKDNFWSSGATGPCGPCSELYYDFNPEKGLKNIDLEDGDRFIEFYNLVFMQYNRDSNGMLSDLKFKNIDTGMGLERMAQILQKKTNNYETDLILPIVKEAALIANIDYFSSDDRTKISLKILGDHTRAIIHLISDGVVASNLGRGYILRRLLRRMIRHGRLLAIKDDFLSRLASIGISLMQNTYPDLKNNKERILREINIEEKRFLETLDRGEKLLNDLIRSGEKLISGTKAFELYDTYGFPLELTKEILEEKNINVDLEGFTREMEAQKERAKAASQKIDLTLKGSIEREIDLFDQTIFEGYDSLNSQGIVKGIFFESNSVEKAIQGQTVQIILDQTSFYGESGGQVGDTGTISRNDAEIDIDKVIRKKNIFLHCGTVRKGEICRNQLVETRVDKFNRAKAESNHTATHLLQSALKLIIDKSVSQRGSLVGFNKLRFDFNSPQPLSKEQISQVESLVNSWISENHPIEVKNMDKDDALKAGALAMFGEKYGDIVRVVDVPGVSMELCGGTHVQTTSEVGSFKIISEIGISSGIRRIEALSGQLVLDYFKERDETVNKLSDLLKARPSQLFERIDSLQTELVNKNKEIQRMKDEIAYFKYSSLSSSAKKIGSFSLIINQIDGLDGSSLQSAALDLTSKLGDKSVVILGGIPDTEKKKLLFVVSFGDDLVRRGMHAGKLINEISRICSGGGGGKPNFAQAGAKDIDKLNDALEYARKDLWEKLLSYSDK</sequence>
<reference key="1">
    <citation type="journal article" date="2007" name="PLoS Genet.">
        <title>Patterns and implications of gene gain and loss in the evolution of Prochlorococcus.</title>
        <authorList>
            <person name="Kettler G.C."/>
            <person name="Martiny A.C."/>
            <person name="Huang K."/>
            <person name="Zucker J."/>
            <person name="Coleman M.L."/>
            <person name="Rodrigue S."/>
            <person name="Chen F."/>
            <person name="Lapidus A."/>
            <person name="Ferriera S."/>
            <person name="Johnson J."/>
            <person name="Steglich C."/>
            <person name="Church G.M."/>
            <person name="Richardson P."/>
            <person name="Chisholm S.W."/>
        </authorList>
    </citation>
    <scope>NUCLEOTIDE SEQUENCE [LARGE SCALE GENOMIC DNA]</scope>
    <source>
        <strain>MIT 9515</strain>
    </source>
</reference>
<dbReference type="EC" id="6.1.1.7" evidence="1"/>
<dbReference type="EMBL" id="CP000552">
    <property type="protein sequence ID" value="ABM71260.1"/>
    <property type="molecule type" value="Genomic_DNA"/>
</dbReference>
<dbReference type="RefSeq" id="WP_011819377.1">
    <property type="nucleotide sequence ID" value="NC_008817.1"/>
</dbReference>
<dbReference type="SMR" id="A2BTZ9"/>
<dbReference type="STRING" id="167542.P9515_00511"/>
<dbReference type="GeneID" id="60200833"/>
<dbReference type="KEGG" id="pmc:P9515_00511"/>
<dbReference type="eggNOG" id="COG0013">
    <property type="taxonomic scope" value="Bacteria"/>
</dbReference>
<dbReference type="HOGENOM" id="CLU_004485_1_0_3"/>
<dbReference type="OrthoDB" id="9803884at2"/>
<dbReference type="Proteomes" id="UP000001589">
    <property type="component" value="Chromosome"/>
</dbReference>
<dbReference type="GO" id="GO:0005829">
    <property type="term" value="C:cytosol"/>
    <property type="evidence" value="ECO:0007669"/>
    <property type="project" value="TreeGrafter"/>
</dbReference>
<dbReference type="GO" id="GO:0004813">
    <property type="term" value="F:alanine-tRNA ligase activity"/>
    <property type="evidence" value="ECO:0007669"/>
    <property type="project" value="UniProtKB-UniRule"/>
</dbReference>
<dbReference type="GO" id="GO:0002161">
    <property type="term" value="F:aminoacyl-tRNA deacylase activity"/>
    <property type="evidence" value="ECO:0007669"/>
    <property type="project" value="TreeGrafter"/>
</dbReference>
<dbReference type="GO" id="GO:0005524">
    <property type="term" value="F:ATP binding"/>
    <property type="evidence" value="ECO:0007669"/>
    <property type="project" value="UniProtKB-UniRule"/>
</dbReference>
<dbReference type="GO" id="GO:0000049">
    <property type="term" value="F:tRNA binding"/>
    <property type="evidence" value="ECO:0007669"/>
    <property type="project" value="UniProtKB-KW"/>
</dbReference>
<dbReference type="GO" id="GO:0008270">
    <property type="term" value="F:zinc ion binding"/>
    <property type="evidence" value="ECO:0007669"/>
    <property type="project" value="UniProtKB-UniRule"/>
</dbReference>
<dbReference type="GO" id="GO:0006419">
    <property type="term" value="P:alanyl-tRNA aminoacylation"/>
    <property type="evidence" value="ECO:0007669"/>
    <property type="project" value="UniProtKB-UniRule"/>
</dbReference>
<dbReference type="CDD" id="cd00673">
    <property type="entry name" value="AlaRS_core"/>
    <property type="match status" value="1"/>
</dbReference>
<dbReference type="FunFam" id="3.10.310.40:FF:000001">
    <property type="entry name" value="Alanine--tRNA ligase"/>
    <property type="match status" value="1"/>
</dbReference>
<dbReference type="FunFam" id="3.30.54.20:FF:000001">
    <property type="entry name" value="Alanine--tRNA ligase"/>
    <property type="match status" value="1"/>
</dbReference>
<dbReference type="FunFam" id="3.30.930.10:FF:000004">
    <property type="entry name" value="Alanine--tRNA ligase"/>
    <property type="match status" value="1"/>
</dbReference>
<dbReference type="FunFam" id="3.30.980.10:FF:000004">
    <property type="entry name" value="Alanine--tRNA ligase, cytoplasmic"/>
    <property type="match status" value="1"/>
</dbReference>
<dbReference type="Gene3D" id="2.40.30.130">
    <property type="match status" value="1"/>
</dbReference>
<dbReference type="Gene3D" id="3.10.310.40">
    <property type="match status" value="1"/>
</dbReference>
<dbReference type="Gene3D" id="3.30.54.20">
    <property type="match status" value="1"/>
</dbReference>
<dbReference type="Gene3D" id="6.10.250.550">
    <property type="match status" value="1"/>
</dbReference>
<dbReference type="Gene3D" id="3.30.930.10">
    <property type="entry name" value="Bira Bifunctional Protein, Domain 2"/>
    <property type="match status" value="1"/>
</dbReference>
<dbReference type="Gene3D" id="3.30.980.10">
    <property type="entry name" value="Threonyl-trna Synthetase, Chain A, domain 2"/>
    <property type="match status" value="1"/>
</dbReference>
<dbReference type="HAMAP" id="MF_00036_B">
    <property type="entry name" value="Ala_tRNA_synth_B"/>
    <property type="match status" value="1"/>
</dbReference>
<dbReference type="InterPro" id="IPR045864">
    <property type="entry name" value="aa-tRNA-synth_II/BPL/LPL"/>
</dbReference>
<dbReference type="InterPro" id="IPR002318">
    <property type="entry name" value="Ala-tRNA-lgiase_IIc"/>
</dbReference>
<dbReference type="InterPro" id="IPR018162">
    <property type="entry name" value="Ala-tRNA-ligase_IIc_anticod-bd"/>
</dbReference>
<dbReference type="InterPro" id="IPR018165">
    <property type="entry name" value="Ala-tRNA-synth_IIc_core"/>
</dbReference>
<dbReference type="InterPro" id="IPR018164">
    <property type="entry name" value="Ala-tRNA-synth_IIc_N"/>
</dbReference>
<dbReference type="InterPro" id="IPR050058">
    <property type="entry name" value="Ala-tRNA_ligase"/>
</dbReference>
<dbReference type="InterPro" id="IPR023033">
    <property type="entry name" value="Ala_tRNA_ligase_euk/bac"/>
</dbReference>
<dbReference type="InterPro" id="IPR003156">
    <property type="entry name" value="DHHA1_dom"/>
</dbReference>
<dbReference type="InterPro" id="IPR018163">
    <property type="entry name" value="Thr/Ala-tRNA-synth_IIc_edit"/>
</dbReference>
<dbReference type="InterPro" id="IPR009000">
    <property type="entry name" value="Transl_B-barrel_sf"/>
</dbReference>
<dbReference type="InterPro" id="IPR012947">
    <property type="entry name" value="tRNA_SAD"/>
</dbReference>
<dbReference type="NCBIfam" id="TIGR00344">
    <property type="entry name" value="alaS"/>
    <property type="match status" value="1"/>
</dbReference>
<dbReference type="PANTHER" id="PTHR11777:SF9">
    <property type="entry name" value="ALANINE--TRNA LIGASE, CYTOPLASMIC"/>
    <property type="match status" value="1"/>
</dbReference>
<dbReference type="PANTHER" id="PTHR11777">
    <property type="entry name" value="ALANYL-TRNA SYNTHETASE"/>
    <property type="match status" value="1"/>
</dbReference>
<dbReference type="Pfam" id="PF02272">
    <property type="entry name" value="DHHA1"/>
    <property type="match status" value="1"/>
</dbReference>
<dbReference type="Pfam" id="PF01411">
    <property type="entry name" value="tRNA-synt_2c"/>
    <property type="match status" value="1"/>
</dbReference>
<dbReference type="Pfam" id="PF07973">
    <property type="entry name" value="tRNA_SAD"/>
    <property type="match status" value="1"/>
</dbReference>
<dbReference type="PRINTS" id="PR00980">
    <property type="entry name" value="TRNASYNTHALA"/>
</dbReference>
<dbReference type="SMART" id="SM00863">
    <property type="entry name" value="tRNA_SAD"/>
    <property type="match status" value="1"/>
</dbReference>
<dbReference type="SUPFAM" id="SSF55681">
    <property type="entry name" value="Class II aaRS and biotin synthetases"/>
    <property type="match status" value="1"/>
</dbReference>
<dbReference type="SUPFAM" id="SSF101353">
    <property type="entry name" value="Putative anticodon-binding domain of alanyl-tRNA synthetase (AlaRS)"/>
    <property type="match status" value="1"/>
</dbReference>
<dbReference type="SUPFAM" id="SSF55186">
    <property type="entry name" value="ThrRS/AlaRS common domain"/>
    <property type="match status" value="1"/>
</dbReference>
<dbReference type="SUPFAM" id="SSF50447">
    <property type="entry name" value="Translation proteins"/>
    <property type="match status" value="1"/>
</dbReference>
<dbReference type="PROSITE" id="PS50860">
    <property type="entry name" value="AA_TRNA_LIGASE_II_ALA"/>
    <property type="match status" value="1"/>
</dbReference>
<evidence type="ECO:0000255" key="1">
    <source>
        <dbReference type="HAMAP-Rule" id="MF_00036"/>
    </source>
</evidence>
<protein>
    <recommendedName>
        <fullName evidence="1">Alanine--tRNA ligase</fullName>
        <ecNumber evidence="1">6.1.1.7</ecNumber>
    </recommendedName>
    <alternativeName>
        <fullName evidence="1">Alanyl-tRNA synthetase</fullName>
        <shortName evidence="1">AlaRS</shortName>
    </alternativeName>
</protein>
<comment type="function">
    <text evidence="1">Catalyzes the attachment of alanine to tRNA(Ala) in a two-step reaction: alanine is first activated by ATP to form Ala-AMP and then transferred to the acceptor end of tRNA(Ala). Also edits incorrectly charged Ser-tRNA(Ala) and Gly-tRNA(Ala) via its editing domain.</text>
</comment>
<comment type="catalytic activity">
    <reaction evidence="1">
        <text>tRNA(Ala) + L-alanine + ATP = L-alanyl-tRNA(Ala) + AMP + diphosphate</text>
        <dbReference type="Rhea" id="RHEA:12540"/>
        <dbReference type="Rhea" id="RHEA-COMP:9657"/>
        <dbReference type="Rhea" id="RHEA-COMP:9923"/>
        <dbReference type="ChEBI" id="CHEBI:30616"/>
        <dbReference type="ChEBI" id="CHEBI:33019"/>
        <dbReference type="ChEBI" id="CHEBI:57972"/>
        <dbReference type="ChEBI" id="CHEBI:78442"/>
        <dbReference type="ChEBI" id="CHEBI:78497"/>
        <dbReference type="ChEBI" id="CHEBI:456215"/>
        <dbReference type="EC" id="6.1.1.7"/>
    </reaction>
</comment>
<comment type="cofactor">
    <cofactor evidence="1">
        <name>Zn(2+)</name>
        <dbReference type="ChEBI" id="CHEBI:29105"/>
    </cofactor>
    <text evidence="1">Binds 1 zinc ion per subunit.</text>
</comment>
<comment type="subcellular location">
    <subcellularLocation>
        <location evidence="1">Cytoplasm</location>
    </subcellularLocation>
</comment>
<comment type="domain">
    <text evidence="1">Consists of three domains; the N-terminal catalytic domain, the editing domain and the C-terminal C-Ala domain. The editing domain removes incorrectly charged amino acids, while the C-Ala domain, along with tRNA(Ala), serves as a bridge to cooperatively bring together the editing and aminoacylation centers thus stimulating deacylation of misacylated tRNAs.</text>
</comment>
<comment type="similarity">
    <text evidence="1">Belongs to the class-II aminoacyl-tRNA synthetase family.</text>
</comment>
<organism>
    <name type="scientific">Prochlorococcus marinus (strain MIT 9515)</name>
    <dbReference type="NCBI Taxonomy" id="167542"/>
    <lineage>
        <taxon>Bacteria</taxon>
        <taxon>Bacillati</taxon>
        <taxon>Cyanobacteriota</taxon>
        <taxon>Cyanophyceae</taxon>
        <taxon>Synechococcales</taxon>
        <taxon>Prochlorococcaceae</taxon>
        <taxon>Prochlorococcus</taxon>
    </lineage>
</organism>
<name>SYA_PROM5</name>
<proteinExistence type="inferred from homology"/>
<gene>
    <name evidence="1" type="primary">alaS</name>
    <name type="ordered locus">P9515_00511</name>
</gene>
<keyword id="KW-0030">Aminoacyl-tRNA synthetase</keyword>
<keyword id="KW-0067">ATP-binding</keyword>
<keyword id="KW-0963">Cytoplasm</keyword>
<keyword id="KW-0436">Ligase</keyword>
<keyword id="KW-0479">Metal-binding</keyword>
<keyword id="KW-0547">Nucleotide-binding</keyword>
<keyword id="KW-0648">Protein biosynthesis</keyword>
<keyword id="KW-0694">RNA-binding</keyword>
<keyword id="KW-0820">tRNA-binding</keyword>
<keyword id="KW-0862">Zinc</keyword>
<feature type="chain" id="PRO_0000347729" description="Alanine--tRNA ligase">
    <location>
        <begin position="1"/>
        <end position="886"/>
    </location>
</feature>
<feature type="binding site" evidence="1">
    <location>
        <position position="564"/>
    </location>
    <ligand>
        <name>Zn(2+)</name>
        <dbReference type="ChEBI" id="CHEBI:29105"/>
    </ligand>
</feature>
<feature type="binding site" evidence="1">
    <location>
        <position position="568"/>
    </location>
    <ligand>
        <name>Zn(2+)</name>
        <dbReference type="ChEBI" id="CHEBI:29105"/>
    </ligand>
</feature>
<feature type="binding site" evidence="1">
    <location>
        <position position="666"/>
    </location>
    <ligand>
        <name>Zn(2+)</name>
        <dbReference type="ChEBI" id="CHEBI:29105"/>
    </ligand>
</feature>
<feature type="binding site" evidence="1">
    <location>
        <position position="670"/>
    </location>
    <ligand>
        <name>Zn(2+)</name>
        <dbReference type="ChEBI" id="CHEBI:29105"/>
    </ligand>
</feature>